<evidence type="ECO:0000255" key="1">
    <source>
        <dbReference type="HAMAP-Rule" id="MF_00539"/>
    </source>
</evidence>
<evidence type="ECO:0000256" key="2">
    <source>
        <dbReference type="SAM" id="MobiDB-lite"/>
    </source>
</evidence>
<evidence type="ECO:0000305" key="3"/>
<organism>
    <name type="scientific">Thioalkalivibrio sulfidiphilus (strain HL-EbGR7)</name>
    <dbReference type="NCBI Taxonomy" id="396588"/>
    <lineage>
        <taxon>Bacteria</taxon>
        <taxon>Pseudomonadati</taxon>
        <taxon>Pseudomonadota</taxon>
        <taxon>Gammaproteobacteria</taxon>
        <taxon>Chromatiales</taxon>
        <taxon>Ectothiorhodospiraceae</taxon>
        <taxon>Thioalkalivibrio</taxon>
    </lineage>
</organism>
<accession>B8GQQ2</accession>
<reference key="1">
    <citation type="journal article" date="2011" name="Stand. Genomic Sci.">
        <title>Complete genome sequence of 'Thioalkalivibrio sulfidophilus' HL-EbGr7.</title>
        <authorList>
            <person name="Muyzer G."/>
            <person name="Sorokin D.Y."/>
            <person name="Mavromatis K."/>
            <person name="Lapidus A."/>
            <person name="Clum A."/>
            <person name="Ivanova N."/>
            <person name="Pati A."/>
            <person name="d'Haeseleer P."/>
            <person name="Woyke T."/>
            <person name="Kyrpides N.C."/>
        </authorList>
    </citation>
    <scope>NUCLEOTIDE SEQUENCE [LARGE SCALE GENOMIC DNA]</scope>
    <source>
        <strain>HL-EbGR7</strain>
    </source>
</reference>
<keyword id="KW-1185">Reference proteome</keyword>
<keyword id="KW-0687">Ribonucleoprotein</keyword>
<keyword id="KW-0689">Ribosomal protein</keyword>
<protein>
    <recommendedName>
        <fullName evidence="1">Large ribosomal subunit protein bL27</fullName>
    </recommendedName>
    <alternativeName>
        <fullName evidence="3">50S ribosomal protein L27</fullName>
    </alternativeName>
</protein>
<gene>
    <name evidence="1" type="primary">rpmA</name>
    <name type="ordered locus">Tgr7_3207</name>
</gene>
<dbReference type="EMBL" id="CP001339">
    <property type="protein sequence ID" value="ACL74276.1"/>
    <property type="molecule type" value="Genomic_DNA"/>
</dbReference>
<dbReference type="RefSeq" id="WP_012639738.1">
    <property type="nucleotide sequence ID" value="NC_011901.1"/>
</dbReference>
<dbReference type="SMR" id="B8GQQ2"/>
<dbReference type="STRING" id="396588.Tgr7_3207"/>
<dbReference type="KEGG" id="tgr:Tgr7_3207"/>
<dbReference type="eggNOG" id="COG0211">
    <property type="taxonomic scope" value="Bacteria"/>
</dbReference>
<dbReference type="HOGENOM" id="CLU_095424_4_1_6"/>
<dbReference type="OrthoDB" id="9803474at2"/>
<dbReference type="Proteomes" id="UP000002383">
    <property type="component" value="Chromosome"/>
</dbReference>
<dbReference type="GO" id="GO:0022625">
    <property type="term" value="C:cytosolic large ribosomal subunit"/>
    <property type="evidence" value="ECO:0007669"/>
    <property type="project" value="TreeGrafter"/>
</dbReference>
<dbReference type="GO" id="GO:0003735">
    <property type="term" value="F:structural constituent of ribosome"/>
    <property type="evidence" value="ECO:0007669"/>
    <property type="project" value="InterPro"/>
</dbReference>
<dbReference type="GO" id="GO:0006412">
    <property type="term" value="P:translation"/>
    <property type="evidence" value="ECO:0007669"/>
    <property type="project" value="UniProtKB-UniRule"/>
</dbReference>
<dbReference type="FunFam" id="2.40.50.100:FF:000001">
    <property type="entry name" value="50S ribosomal protein L27"/>
    <property type="match status" value="1"/>
</dbReference>
<dbReference type="Gene3D" id="2.40.50.100">
    <property type="match status" value="1"/>
</dbReference>
<dbReference type="HAMAP" id="MF_00539">
    <property type="entry name" value="Ribosomal_bL27"/>
    <property type="match status" value="1"/>
</dbReference>
<dbReference type="InterPro" id="IPR001684">
    <property type="entry name" value="Ribosomal_bL27"/>
</dbReference>
<dbReference type="InterPro" id="IPR018261">
    <property type="entry name" value="Ribosomal_bL27_CS"/>
</dbReference>
<dbReference type="NCBIfam" id="TIGR00062">
    <property type="entry name" value="L27"/>
    <property type="match status" value="1"/>
</dbReference>
<dbReference type="PANTHER" id="PTHR15893:SF0">
    <property type="entry name" value="LARGE RIBOSOMAL SUBUNIT PROTEIN BL27M"/>
    <property type="match status" value="1"/>
</dbReference>
<dbReference type="PANTHER" id="PTHR15893">
    <property type="entry name" value="RIBOSOMAL PROTEIN L27"/>
    <property type="match status" value="1"/>
</dbReference>
<dbReference type="Pfam" id="PF01016">
    <property type="entry name" value="Ribosomal_L27"/>
    <property type="match status" value="1"/>
</dbReference>
<dbReference type="PRINTS" id="PR00063">
    <property type="entry name" value="RIBOSOMALL27"/>
</dbReference>
<dbReference type="SUPFAM" id="SSF110324">
    <property type="entry name" value="Ribosomal L27 protein-like"/>
    <property type="match status" value="1"/>
</dbReference>
<dbReference type="PROSITE" id="PS00831">
    <property type="entry name" value="RIBOSOMAL_L27"/>
    <property type="match status" value="1"/>
</dbReference>
<sequence length="85" mass="9112">MAHKKAGGSTRNGRDSESKRLGVKRFGGQTVLAGNILVRQRGTQFHPGLNVGCGKDHTLFATSDGTVVFETKGPKNRKYVSVVQA</sequence>
<comment type="similarity">
    <text evidence="1">Belongs to the bacterial ribosomal protein bL27 family.</text>
</comment>
<feature type="chain" id="PRO_1000146559" description="Large ribosomal subunit protein bL27">
    <location>
        <begin position="1"/>
        <end position="85"/>
    </location>
</feature>
<feature type="region of interest" description="Disordered" evidence="2">
    <location>
        <begin position="1"/>
        <end position="23"/>
    </location>
</feature>
<name>RL27_THISH</name>
<proteinExistence type="inferred from homology"/>